<organism>
    <name type="scientific">Cereibacter sphaeroides (strain KD131 / KCTC 12085)</name>
    <name type="common">Rhodobacter sphaeroides</name>
    <dbReference type="NCBI Taxonomy" id="557760"/>
    <lineage>
        <taxon>Bacteria</taxon>
        <taxon>Pseudomonadati</taxon>
        <taxon>Pseudomonadota</taxon>
        <taxon>Alphaproteobacteria</taxon>
        <taxon>Rhodobacterales</taxon>
        <taxon>Paracoccaceae</taxon>
        <taxon>Cereibacter</taxon>
    </lineage>
</organism>
<gene>
    <name evidence="1" type="primary">prfA</name>
    <name type="ordered locus">RSKD131_1224</name>
</gene>
<feature type="chain" id="PRO_1000193502" description="Peptide chain release factor 1">
    <location>
        <begin position="1"/>
        <end position="351"/>
    </location>
</feature>
<feature type="modified residue" description="N5-methylglutamine" evidence="1">
    <location>
        <position position="229"/>
    </location>
</feature>
<proteinExistence type="inferred from homology"/>
<reference key="1">
    <citation type="journal article" date="2009" name="J. Bacteriol.">
        <title>Complete genome sequence of Rhodobacter sphaeroides KD131.</title>
        <authorList>
            <person name="Lim S.-K."/>
            <person name="Kim S.J."/>
            <person name="Cha S.H."/>
            <person name="Oh Y.-K."/>
            <person name="Rhee H.-J."/>
            <person name="Kim M.-S."/>
            <person name="Lee J.K."/>
        </authorList>
    </citation>
    <scope>NUCLEOTIDE SEQUENCE [LARGE SCALE GENOMIC DNA]</scope>
    <source>
        <strain>KD131 / KCTC 12085</strain>
    </source>
</reference>
<keyword id="KW-0963">Cytoplasm</keyword>
<keyword id="KW-0488">Methylation</keyword>
<keyword id="KW-0648">Protein biosynthesis</keyword>
<dbReference type="EMBL" id="CP001150">
    <property type="protein sequence ID" value="ACM01084.1"/>
    <property type="molecule type" value="Genomic_DNA"/>
</dbReference>
<dbReference type="RefSeq" id="WP_015920601.1">
    <property type="nucleotide sequence ID" value="NC_011963.1"/>
</dbReference>
<dbReference type="SMR" id="B9KST8"/>
<dbReference type="GeneID" id="67446648"/>
<dbReference type="KEGG" id="rsk:RSKD131_1224"/>
<dbReference type="HOGENOM" id="CLU_036856_0_1_5"/>
<dbReference type="GO" id="GO:0005737">
    <property type="term" value="C:cytoplasm"/>
    <property type="evidence" value="ECO:0007669"/>
    <property type="project" value="UniProtKB-SubCell"/>
</dbReference>
<dbReference type="GO" id="GO:0016149">
    <property type="term" value="F:translation release factor activity, codon specific"/>
    <property type="evidence" value="ECO:0007669"/>
    <property type="project" value="UniProtKB-UniRule"/>
</dbReference>
<dbReference type="FunFam" id="3.30.160.20:FF:000004">
    <property type="entry name" value="Peptide chain release factor 1"/>
    <property type="match status" value="1"/>
</dbReference>
<dbReference type="FunFam" id="3.30.70.1660:FF:000002">
    <property type="entry name" value="Peptide chain release factor 1"/>
    <property type="match status" value="1"/>
</dbReference>
<dbReference type="FunFam" id="3.30.70.1660:FF:000004">
    <property type="entry name" value="Peptide chain release factor 1"/>
    <property type="match status" value="1"/>
</dbReference>
<dbReference type="Gene3D" id="3.30.160.20">
    <property type="match status" value="1"/>
</dbReference>
<dbReference type="Gene3D" id="3.30.70.1660">
    <property type="match status" value="1"/>
</dbReference>
<dbReference type="Gene3D" id="6.10.140.1950">
    <property type="match status" value="1"/>
</dbReference>
<dbReference type="HAMAP" id="MF_00093">
    <property type="entry name" value="Rel_fac_1"/>
    <property type="match status" value="1"/>
</dbReference>
<dbReference type="InterPro" id="IPR005139">
    <property type="entry name" value="PCRF"/>
</dbReference>
<dbReference type="InterPro" id="IPR000352">
    <property type="entry name" value="Pep_chain_release_fac_I"/>
</dbReference>
<dbReference type="InterPro" id="IPR045853">
    <property type="entry name" value="Pep_chain_release_fac_I_sf"/>
</dbReference>
<dbReference type="InterPro" id="IPR050057">
    <property type="entry name" value="Prokaryotic/Mito_RF"/>
</dbReference>
<dbReference type="InterPro" id="IPR004373">
    <property type="entry name" value="RF-1"/>
</dbReference>
<dbReference type="NCBIfam" id="TIGR00019">
    <property type="entry name" value="prfA"/>
    <property type="match status" value="1"/>
</dbReference>
<dbReference type="NCBIfam" id="NF001859">
    <property type="entry name" value="PRK00591.1"/>
    <property type="match status" value="1"/>
</dbReference>
<dbReference type="PANTHER" id="PTHR43804">
    <property type="entry name" value="LD18447P"/>
    <property type="match status" value="1"/>
</dbReference>
<dbReference type="PANTHER" id="PTHR43804:SF7">
    <property type="entry name" value="LD18447P"/>
    <property type="match status" value="1"/>
</dbReference>
<dbReference type="Pfam" id="PF03462">
    <property type="entry name" value="PCRF"/>
    <property type="match status" value="1"/>
</dbReference>
<dbReference type="Pfam" id="PF00472">
    <property type="entry name" value="RF-1"/>
    <property type="match status" value="1"/>
</dbReference>
<dbReference type="SMART" id="SM00937">
    <property type="entry name" value="PCRF"/>
    <property type="match status" value="1"/>
</dbReference>
<dbReference type="SUPFAM" id="SSF75620">
    <property type="entry name" value="Release factor"/>
    <property type="match status" value="1"/>
</dbReference>
<dbReference type="PROSITE" id="PS00745">
    <property type="entry name" value="RF_PROK_I"/>
    <property type="match status" value="1"/>
</dbReference>
<evidence type="ECO:0000255" key="1">
    <source>
        <dbReference type="HAMAP-Rule" id="MF_00093"/>
    </source>
</evidence>
<protein>
    <recommendedName>
        <fullName evidence="1">Peptide chain release factor 1</fullName>
        <shortName evidence="1">RF-1</shortName>
    </recommendedName>
</protein>
<comment type="function">
    <text evidence="1">Peptide chain release factor 1 directs the termination of translation in response to the peptide chain termination codons UAG and UAA.</text>
</comment>
<comment type="subcellular location">
    <subcellularLocation>
        <location evidence="1">Cytoplasm</location>
    </subcellularLocation>
</comment>
<comment type="PTM">
    <text evidence="1">Methylated by PrmC. Methylation increases the termination efficiency of RF1.</text>
</comment>
<comment type="similarity">
    <text evidence="1">Belongs to the prokaryotic/mitochondrial release factor family.</text>
</comment>
<sequence length="351" mass="38595">MVPMDRLLQIVRRFEFLEARLSAGAAPAEIAALSREYAELKPVVVEISAYRTALEDLAEAEAMLSDPEMRALAEDEIPALRARIPGMEQALRLALLPKDAADARPAILEIRPGTGGEEAALFAGDLLRMYQRYAEGQGWRFELLDLAPSELGGIREATARVEGEGAFARLKYESGVHRVQRVPETEAQGRIHTSAATVAVLPEAEEVDLEIPAADLRIDTMRSSGAGGQHVNTTDSAVRITHLPTGIIVTSSEKSQHRNREIAMQVLRARLYDLERQRLADARSADRKAQVGSGDRSERIRTYNFPQGRMTDHRINLTLYALPQIMAGDLSEVISALTAHDQAARLAEMEA</sequence>
<accession>B9KST8</accession>
<name>RF1_CERSK</name>